<feature type="chain" id="PRO_1000076506" description="Elongation factor P">
    <location>
        <begin position="1"/>
        <end position="188"/>
    </location>
</feature>
<organism>
    <name type="scientific">Caulobacter sp. (strain K31)</name>
    <dbReference type="NCBI Taxonomy" id="366602"/>
    <lineage>
        <taxon>Bacteria</taxon>
        <taxon>Pseudomonadati</taxon>
        <taxon>Pseudomonadota</taxon>
        <taxon>Alphaproteobacteria</taxon>
        <taxon>Caulobacterales</taxon>
        <taxon>Caulobacteraceae</taxon>
        <taxon>Caulobacter</taxon>
    </lineage>
</organism>
<dbReference type="EMBL" id="CP000927">
    <property type="protein sequence ID" value="ABZ69892.1"/>
    <property type="molecule type" value="Genomic_DNA"/>
</dbReference>
<dbReference type="SMR" id="B0SUL4"/>
<dbReference type="STRING" id="366602.Caul_0761"/>
<dbReference type="KEGG" id="cak:Caul_0761"/>
<dbReference type="eggNOG" id="COG0231">
    <property type="taxonomic scope" value="Bacteria"/>
</dbReference>
<dbReference type="HOGENOM" id="CLU_074944_1_1_5"/>
<dbReference type="OrthoDB" id="9801844at2"/>
<dbReference type="UniPathway" id="UPA00345"/>
<dbReference type="GO" id="GO:0005737">
    <property type="term" value="C:cytoplasm"/>
    <property type="evidence" value="ECO:0007669"/>
    <property type="project" value="UniProtKB-SubCell"/>
</dbReference>
<dbReference type="GO" id="GO:0003746">
    <property type="term" value="F:translation elongation factor activity"/>
    <property type="evidence" value="ECO:0007669"/>
    <property type="project" value="UniProtKB-UniRule"/>
</dbReference>
<dbReference type="GO" id="GO:0043043">
    <property type="term" value="P:peptide biosynthetic process"/>
    <property type="evidence" value="ECO:0007669"/>
    <property type="project" value="InterPro"/>
</dbReference>
<dbReference type="CDD" id="cd04470">
    <property type="entry name" value="S1_EF-P_repeat_1"/>
    <property type="match status" value="1"/>
</dbReference>
<dbReference type="CDD" id="cd05794">
    <property type="entry name" value="S1_EF-P_repeat_2"/>
    <property type="match status" value="1"/>
</dbReference>
<dbReference type="FunFam" id="2.40.50.140:FF:000004">
    <property type="entry name" value="Elongation factor P"/>
    <property type="match status" value="1"/>
</dbReference>
<dbReference type="FunFam" id="2.40.50.140:FF:000009">
    <property type="entry name" value="Elongation factor P"/>
    <property type="match status" value="1"/>
</dbReference>
<dbReference type="Gene3D" id="2.30.30.30">
    <property type="match status" value="1"/>
</dbReference>
<dbReference type="Gene3D" id="2.40.50.140">
    <property type="entry name" value="Nucleic acid-binding proteins"/>
    <property type="match status" value="2"/>
</dbReference>
<dbReference type="HAMAP" id="MF_00141">
    <property type="entry name" value="EF_P"/>
    <property type="match status" value="1"/>
</dbReference>
<dbReference type="InterPro" id="IPR015365">
    <property type="entry name" value="Elong-fact-P_C"/>
</dbReference>
<dbReference type="InterPro" id="IPR012340">
    <property type="entry name" value="NA-bd_OB-fold"/>
</dbReference>
<dbReference type="InterPro" id="IPR014722">
    <property type="entry name" value="Rib_uL2_dom2"/>
</dbReference>
<dbReference type="InterPro" id="IPR020599">
    <property type="entry name" value="Transl_elong_fac_P/YeiP"/>
</dbReference>
<dbReference type="InterPro" id="IPR013185">
    <property type="entry name" value="Transl_elong_KOW-like"/>
</dbReference>
<dbReference type="InterPro" id="IPR001059">
    <property type="entry name" value="Transl_elong_P/YeiP_cen"/>
</dbReference>
<dbReference type="InterPro" id="IPR013852">
    <property type="entry name" value="Transl_elong_P/YeiP_CS"/>
</dbReference>
<dbReference type="InterPro" id="IPR011768">
    <property type="entry name" value="Transl_elongation_fac_P"/>
</dbReference>
<dbReference type="InterPro" id="IPR008991">
    <property type="entry name" value="Translation_prot_SH3-like_sf"/>
</dbReference>
<dbReference type="NCBIfam" id="TIGR00038">
    <property type="entry name" value="efp"/>
    <property type="match status" value="1"/>
</dbReference>
<dbReference type="NCBIfam" id="NF001810">
    <property type="entry name" value="PRK00529.1"/>
    <property type="match status" value="1"/>
</dbReference>
<dbReference type="PANTHER" id="PTHR30053">
    <property type="entry name" value="ELONGATION FACTOR P"/>
    <property type="match status" value="1"/>
</dbReference>
<dbReference type="PANTHER" id="PTHR30053:SF14">
    <property type="entry name" value="TRANSLATION ELONGATION FACTOR KOW-LIKE DOMAIN-CONTAINING PROTEIN"/>
    <property type="match status" value="1"/>
</dbReference>
<dbReference type="Pfam" id="PF01132">
    <property type="entry name" value="EFP"/>
    <property type="match status" value="1"/>
</dbReference>
<dbReference type="Pfam" id="PF08207">
    <property type="entry name" value="EFP_N"/>
    <property type="match status" value="1"/>
</dbReference>
<dbReference type="Pfam" id="PF09285">
    <property type="entry name" value="Elong-fact-P_C"/>
    <property type="match status" value="1"/>
</dbReference>
<dbReference type="PIRSF" id="PIRSF005901">
    <property type="entry name" value="EF-P"/>
    <property type="match status" value="1"/>
</dbReference>
<dbReference type="SMART" id="SM01185">
    <property type="entry name" value="EFP"/>
    <property type="match status" value="1"/>
</dbReference>
<dbReference type="SMART" id="SM00841">
    <property type="entry name" value="Elong-fact-P_C"/>
    <property type="match status" value="1"/>
</dbReference>
<dbReference type="SUPFAM" id="SSF50249">
    <property type="entry name" value="Nucleic acid-binding proteins"/>
    <property type="match status" value="2"/>
</dbReference>
<dbReference type="SUPFAM" id="SSF50104">
    <property type="entry name" value="Translation proteins SH3-like domain"/>
    <property type="match status" value="1"/>
</dbReference>
<dbReference type="PROSITE" id="PS01275">
    <property type="entry name" value="EFP"/>
    <property type="match status" value="1"/>
</dbReference>
<reference key="1">
    <citation type="submission" date="2008-01" db="EMBL/GenBank/DDBJ databases">
        <title>Complete sequence of chromosome of Caulobacter sp. K31.</title>
        <authorList>
            <consortium name="US DOE Joint Genome Institute"/>
            <person name="Copeland A."/>
            <person name="Lucas S."/>
            <person name="Lapidus A."/>
            <person name="Barry K."/>
            <person name="Glavina del Rio T."/>
            <person name="Dalin E."/>
            <person name="Tice H."/>
            <person name="Pitluck S."/>
            <person name="Bruce D."/>
            <person name="Goodwin L."/>
            <person name="Thompson L.S."/>
            <person name="Brettin T."/>
            <person name="Detter J.C."/>
            <person name="Han C."/>
            <person name="Schmutz J."/>
            <person name="Larimer F."/>
            <person name="Land M."/>
            <person name="Hauser L."/>
            <person name="Kyrpides N."/>
            <person name="Kim E."/>
            <person name="Stephens C."/>
            <person name="Richardson P."/>
        </authorList>
    </citation>
    <scope>NUCLEOTIDE SEQUENCE [LARGE SCALE GENOMIC DNA]</scope>
    <source>
        <strain>K31</strain>
    </source>
</reference>
<gene>
    <name evidence="1" type="primary">efp</name>
    <name type="ordered locus">Caul_0761</name>
</gene>
<proteinExistence type="inferred from homology"/>
<sequence>MKVAASSLRKGFVVDMDGKLYVVLNVENIHPGKGTPVTQLNMRRISDGVKVSERYRTTETVERAFVDQRDHTFLYQDGEGYHFMNPESFDQLVASPEVIGDLGAYLAEGMVVQLSTHNDLPIALELPRTVTLEIVETEPSVKGQTASSSYKPAILSNGVRTMVPPYIAAGTRVIILTEDGSYQERAKD</sequence>
<name>EFP_CAUSK</name>
<evidence type="ECO:0000255" key="1">
    <source>
        <dbReference type="HAMAP-Rule" id="MF_00141"/>
    </source>
</evidence>
<accession>B0SUL4</accession>
<keyword id="KW-0963">Cytoplasm</keyword>
<keyword id="KW-0251">Elongation factor</keyword>
<keyword id="KW-0648">Protein biosynthesis</keyword>
<protein>
    <recommendedName>
        <fullName evidence="1">Elongation factor P</fullName>
        <shortName evidence="1">EF-P</shortName>
    </recommendedName>
</protein>
<comment type="function">
    <text evidence="1">Involved in peptide bond synthesis. Stimulates efficient translation and peptide-bond synthesis on native or reconstituted 70S ribosomes in vitro. Probably functions indirectly by altering the affinity of the ribosome for aminoacyl-tRNA, thus increasing their reactivity as acceptors for peptidyl transferase.</text>
</comment>
<comment type="pathway">
    <text evidence="1">Protein biosynthesis; polypeptide chain elongation.</text>
</comment>
<comment type="subcellular location">
    <subcellularLocation>
        <location evidence="1">Cytoplasm</location>
    </subcellularLocation>
</comment>
<comment type="similarity">
    <text evidence="1">Belongs to the elongation factor P family.</text>
</comment>